<feature type="chain" id="PRO_0000088760" description="Citrate/sodium symporter">
    <location>
        <begin position="1"/>
        <end position="446"/>
    </location>
</feature>
<feature type="transmembrane region" description="Helical" evidence="2">
    <location>
        <begin position="23"/>
        <end position="43"/>
    </location>
</feature>
<feature type="transmembrane region" description="Helical" evidence="2">
    <location>
        <begin position="46"/>
        <end position="66"/>
    </location>
</feature>
<feature type="transmembrane region" description="Helical" evidence="2">
    <location>
        <begin position="79"/>
        <end position="99"/>
    </location>
</feature>
<feature type="transmembrane region" description="Helical" evidence="2">
    <location>
        <begin position="110"/>
        <end position="130"/>
    </location>
</feature>
<feature type="transmembrane region" description="Helical" evidence="2">
    <location>
        <begin position="148"/>
        <end position="168"/>
    </location>
</feature>
<feature type="transmembrane region" description="Helical" evidence="2">
    <location>
        <begin position="213"/>
        <end position="233"/>
    </location>
</feature>
<feature type="transmembrane region" description="Helical" evidence="2">
    <location>
        <begin position="267"/>
        <end position="287"/>
    </location>
</feature>
<feature type="transmembrane region" description="Helical" evidence="2">
    <location>
        <begin position="289"/>
        <end position="309"/>
    </location>
</feature>
<feature type="transmembrane region" description="Helical" evidence="2">
    <location>
        <begin position="335"/>
        <end position="355"/>
    </location>
</feature>
<feature type="transmembrane region" description="Helical" evidence="2">
    <location>
        <begin position="364"/>
        <end position="384"/>
    </location>
</feature>
<feature type="transmembrane region" description="Helical" evidence="2">
    <location>
        <begin position="425"/>
        <end position="445"/>
    </location>
</feature>
<feature type="binding site" evidence="1">
    <location>
        <position position="181"/>
    </location>
    <ligand>
        <name>Na(+)</name>
        <dbReference type="ChEBI" id="CHEBI:29101"/>
    </ligand>
</feature>
<feature type="binding site" evidence="1">
    <location>
        <position position="183"/>
    </location>
    <ligand>
        <name>Na(+)</name>
        <dbReference type="ChEBI" id="CHEBI:29101"/>
    </ligand>
</feature>
<feature type="binding site" evidence="1">
    <location>
        <position position="186"/>
    </location>
    <ligand>
        <name>citrate</name>
        <dbReference type="ChEBI" id="CHEBI:16947"/>
    </ligand>
</feature>
<feature type="binding site" evidence="1">
    <location>
        <position position="187"/>
    </location>
    <ligand>
        <name>citrate</name>
        <dbReference type="ChEBI" id="CHEBI:16947"/>
    </ligand>
</feature>
<feature type="binding site" evidence="1">
    <location>
        <position position="399"/>
    </location>
    <ligand>
        <name>Na(+)</name>
        <dbReference type="ChEBI" id="CHEBI:29101"/>
    </ligand>
</feature>
<feature type="binding site" evidence="1">
    <location>
        <position position="401"/>
    </location>
    <ligand>
        <name>Na(+)</name>
        <dbReference type="ChEBI" id="CHEBI:29101"/>
    </ligand>
</feature>
<feature type="binding site" evidence="1">
    <location>
        <position position="402"/>
    </location>
    <ligand>
        <name>citrate</name>
        <dbReference type="ChEBI" id="CHEBI:16947"/>
    </ligand>
</feature>
<feature type="binding site" evidence="1">
    <location>
        <position position="404"/>
    </location>
    <ligand>
        <name>citrate</name>
        <dbReference type="ChEBI" id="CHEBI:16947"/>
    </ligand>
</feature>
<feature type="binding site" evidence="1">
    <location>
        <position position="405"/>
    </location>
    <ligand>
        <name>citrate</name>
        <dbReference type="ChEBI" id="CHEBI:16947"/>
    </ligand>
</feature>
<feature type="binding site" evidence="1">
    <location>
        <position position="428"/>
    </location>
    <ligand>
        <name>citrate</name>
        <dbReference type="ChEBI" id="CHEBI:16947"/>
    </ligand>
</feature>
<gene>
    <name evidence="1" type="primary">citS</name>
    <name type="synonym">citC</name>
    <name type="ordered locus">STM0057</name>
</gene>
<name>CITN_SALTY</name>
<proteinExistence type="inferred from homology"/>
<sequence>MTNMTQASATEKKGASDLLRFKIFGMPLPLYAFALITLLLSHFYNAIPTDLVGGFALMFVMGAIFGEIGKRLPIFNKYIGGAPVMIFLVAAYFVYAGIFTQKEIDAISNVMDKSNFLNLFIAVLITGAILSVNRKLLLKSLLGYIPTILAGIVGASLFGIVIGLCFGIPVDRIMMLYVLPIMGGGNGAGAVPLSEIYHSVTGRSREEYYSTAIAILTIANIFAIIFAALLDMIGKKYTWLSGEGELVRKASFKTEDDEKAGQITHRETAVGMVLSTTCFLLAYVVAKKILPSIGGVSIHYFAWMVLIVAALNASGLCSPEIKAGAKRLSDFFSKQLLWVLMVGVGVCYTDLQEIIDALTFANVVIAAIIVVGAVVGAAIGGWLIGFYPIESSITAGLCMANRGGSGDLEVLSACNRMNLISYAQISSRLGGGIVLVIASIVFSMMV</sequence>
<reference key="1">
    <citation type="journal article" date="2001" name="Nature">
        <title>Complete genome sequence of Salmonella enterica serovar Typhimurium LT2.</title>
        <authorList>
            <person name="McClelland M."/>
            <person name="Sanderson K.E."/>
            <person name="Spieth J."/>
            <person name="Clifton S.W."/>
            <person name="Latreille P."/>
            <person name="Courtney L."/>
            <person name="Porwollik S."/>
            <person name="Ali J."/>
            <person name="Dante M."/>
            <person name="Du F."/>
            <person name="Hou S."/>
            <person name="Layman D."/>
            <person name="Leonard S."/>
            <person name="Nguyen C."/>
            <person name="Scott K."/>
            <person name="Holmes A."/>
            <person name="Grewal N."/>
            <person name="Mulvaney E."/>
            <person name="Ryan E."/>
            <person name="Sun H."/>
            <person name="Florea L."/>
            <person name="Miller W."/>
            <person name="Stoneking T."/>
            <person name="Nhan M."/>
            <person name="Waterston R."/>
            <person name="Wilson R.K."/>
        </authorList>
    </citation>
    <scope>NUCLEOTIDE SEQUENCE [LARGE SCALE GENOMIC DNA]</scope>
    <source>
        <strain>LT2 / SGSC1412 / ATCC 700720</strain>
    </source>
</reference>
<comment type="function">
    <text evidence="1">Secondary active transporter that catalyzes the uptake of citrate across the membrane with the concomitant uptake of sodium.</text>
</comment>
<comment type="catalytic activity">
    <reaction evidence="1">
        <text>citrate(out) + 2 Na(+)(out) = citrate(in) + 2 Na(+)(in)</text>
        <dbReference type="Rhea" id="RHEA:79471"/>
        <dbReference type="ChEBI" id="CHEBI:16947"/>
        <dbReference type="ChEBI" id="CHEBI:29101"/>
    </reaction>
    <physiologicalReaction direction="left-to-right" evidence="1">
        <dbReference type="Rhea" id="RHEA:79472"/>
    </physiologicalReaction>
</comment>
<comment type="subunit">
    <text evidence="1">Homodimer.</text>
</comment>
<comment type="subcellular location">
    <subcellularLocation>
        <location evidence="1">Cell inner membrane</location>
        <topology evidence="1">Multi-pass membrane protein</topology>
    </subcellularLocation>
</comment>
<comment type="similarity">
    <text evidence="3">Belongs to the 2-hydroxycarboxylate transporter (2-HCT) (TC 2.A.24) family.</text>
</comment>
<dbReference type="EMBL" id="AE006468">
    <property type="protein sequence ID" value="AAL19021.1"/>
    <property type="molecule type" value="Genomic_DNA"/>
</dbReference>
<dbReference type="RefSeq" id="NP_459062.1">
    <property type="nucleotide sequence ID" value="NC_003197.2"/>
</dbReference>
<dbReference type="RefSeq" id="WP_000183602.1">
    <property type="nucleotide sequence ID" value="NC_003197.2"/>
</dbReference>
<dbReference type="SMR" id="P0A2F8"/>
<dbReference type="STRING" id="99287.STM0057"/>
<dbReference type="PaxDb" id="99287-STM0057"/>
<dbReference type="GeneID" id="1251575"/>
<dbReference type="KEGG" id="stm:STM0057"/>
<dbReference type="PATRIC" id="fig|99287.12.peg.59"/>
<dbReference type="HOGENOM" id="CLU_041211_0_1_6"/>
<dbReference type="OMA" id="CMANMGG"/>
<dbReference type="PhylomeDB" id="P0A2F8"/>
<dbReference type="BioCyc" id="SENT99287:STM0057-MONOMER"/>
<dbReference type="Proteomes" id="UP000001014">
    <property type="component" value="Chromosome"/>
</dbReference>
<dbReference type="GO" id="GO:0005886">
    <property type="term" value="C:plasma membrane"/>
    <property type="evidence" value="ECO:0007669"/>
    <property type="project" value="UniProtKB-SubCell"/>
</dbReference>
<dbReference type="GO" id="GO:0046872">
    <property type="term" value="F:metal ion binding"/>
    <property type="evidence" value="ECO:0007669"/>
    <property type="project" value="UniProtKB-KW"/>
</dbReference>
<dbReference type="GO" id="GO:0008514">
    <property type="term" value="F:organic anion transmembrane transporter activity"/>
    <property type="evidence" value="ECO:0007669"/>
    <property type="project" value="InterPro"/>
</dbReference>
<dbReference type="GO" id="GO:0015293">
    <property type="term" value="F:symporter activity"/>
    <property type="evidence" value="ECO:0007669"/>
    <property type="project" value="UniProtKB-KW"/>
</dbReference>
<dbReference type="GO" id="GO:0006101">
    <property type="term" value="P:citrate metabolic process"/>
    <property type="evidence" value="ECO:0007669"/>
    <property type="project" value="UniProtKB-KW"/>
</dbReference>
<dbReference type="GO" id="GO:0006814">
    <property type="term" value="P:sodium ion transport"/>
    <property type="evidence" value="ECO:0007669"/>
    <property type="project" value="UniProtKB-KW"/>
</dbReference>
<dbReference type="InterPro" id="IPR018025">
    <property type="entry name" value="2-OHcarbox_trans_Prot/Firm"/>
</dbReference>
<dbReference type="InterPro" id="IPR004679">
    <property type="entry name" value="2-OHcarboxylate_transport"/>
</dbReference>
<dbReference type="NCBIfam" id="TIGR00783">
    <property type="entry name" value="ccs"/>
    <property type="match status" value="1"/>
</dbReference>
<dbReference type="PANTHER" id="PTHR40033:SF1">
    <property type="entry name" value="CITRATE-SODIUM SYMPORTER"/>
    <property type="match status" value="1"/>
</dbReference>
<dbReference type="PANTHER" id="PTHR40033">
    <property type="entry name" value="NA(+)-MALATE SYMPORTER"/>
    <property type="match status" value="1"/>
</dbReference>
<dbReference type="Pfam" id="PF03390">
    <property type="entry name" value="2HCT"/>
    <property type="match status" value="1"/>
</dbReference>
<dbReference type="PIRSF" id="PIRSF005348">
    <property type="entry name" value="YxkH"/>
    <property type="match status" value="1"/>
</dbReference>
<protein>
    <recommendedName>
        <fullName evidence="1">Citrate/sodium symporter</fullName>
    </recommendedName>
    <alternativeName>
        <fullName evidence="1">Citrate transporter CitS</fullName>
    </alternativeName>
</protein>
<evidence type="ECO:0000250" key="1">
    <source>
        <dbReference type="UniProtKB" id="P31602"/>
    </source>
</evidence>
<evidence type="ECO:0000255" key="2"/>
<evidence type="ECO:0000305" key="3"/>
<keyword id="KW-0997">Cell inner membrane</keyword>
<keyword id="KW-1003">Cell membrane</keyword>
<keyword id="KW-0163">Citrate utilization</keyword>
<keyword id="KW-0406">Ion transport</keyword>
<keyword id="KW-0472">Membrane</keyword>
<keyword id="KW-0479">Metal-binding</keyword>
<keyword id="KW-1185">Reference proteome</keyword>
<keyword id="KW-0915">Sodium</keyword>
<keyword id="KW-0739">Sodium transport</keyword>
<keyword id="KW-0769">Symport</keyword>
<keyword id="KW-0812">Transmembrane</keyword>
<keyword id="KW-1133">Transmembrane helix</keyword>
<keyword id="KW-0813">Transport</keyword>
<organism>
    <name type="scientific">Salmonella typhimurium (strain LT2 / SGSC1412 / ATCC 700720)</name>
    <dbReference type="NCBI Taxonomy" id="99287"/>
    <lineage>
        <taxon>Bacteria</taxon>
        <taxon>Pseudomonadati</taxon>
        <taxon>Pseudomonadota</taxon>
        <taxon>Gammaproteobacteria</taxon>
        <taxon>Enterobacterales</taxon>
        <taxon>Enterobacteriaceae</taxon>
        <taxon>Salmonella</taxon>
    </lineage>
</organism>
<accession>P0A2F8</accession>
<accession>P31604</accession>